<feature type="chain" id="PRO_0000314364" description="Carboxy-S-adenosyl-L-methionine synthase">
    <location>
        <begin position="1"/>
        <end position="247"/>
    </location>
</feature>
<feature type="binding site" evidence="1">
    <location>
        <position position="40"/>
    </location>
    <ligand>
        <name>S-adenosyl-L-methionine</name>
        <dbReference type="ChEBI" id="CHEBI:59789"/>
    </ligand>
</feature>
<feature type="binding site" evidence="1">
    <location>
        <begin position="65"/>
        <end position="67"/>
    </location>
    <ligand>
        <name>S-adenosyl-L-methionine</name>
        <dbReference type="ChEBI" id="CHEBI:59789"/>
    </ligand>
</feature>
<feature type="binding site" evidence="1">
    <location>
        <begin position="90"/>
        <end position="91"/>
    </location>
    <ligand>
        <name>S-adenosyl-L-methionine</name>
        <dbReference type="ChEBI" id="CHEBI:59789"/>
    </ligand>
</feature>
<feature type="binding site" evidence="1">
    <location>
        <begin position="122"/>
        <end position="123"/>
    </location>
    <ligand>
        <name>S-adenosyl-L-methionine</name>
        <dbReference type="ChEBI" id="CHEBI:59789"/>
    </ligand>
</feature>
<feature type="binding site" evidence="1">
    <location>
        <position position="137"/>
    </location>
    <ligand>
        <name>S-adenosyl-L-methionine</name>
        <dbReference type="ChEBI" id="CHEBI:59789"/>
    </ligand>
</feature>
<feature type="binding site" evidence="1">
    <location>
        <position position="204"/>
    </location>
    <ligand>
        <name>S-adenosyl-L-methionine</name>
        <dbReference type="ChEBI" id="CHEBI:59789"/>
    </ligand>
</feature>
<sequence length="247" mass="27426">MSKETDRIFAQPLSQVPDFAFNEDVVRVFPDMIKRSVPGYPTIVENLGVLAAQFAQPNTVLYDLGSSLGAVTQALRRHVRGEGCEVIAIDNSSAMVERCREYLNAQDSMFQELLPVQVLEGDILALAFKPASVVALNFTLQFIAPEQRLALLGRIRDALVPGGALILSEKLRFDDPQEQALLTDLHIAFKRANGYSDLEIAQKRSAIENVMKPDSLEEHRQRLLAAGFSKVVPWFQCLNFTSLIALP</sequence>
<organism>
    <name type="scientific">Pseudomonas syringae pv. syringae (strain B728a)</name>
    <dbReference type="NCBI Taxonomy" id="205918"/>
    <lineage>
        <taxon>Bacteria</taxon>
        <taxon>Pseudomonadati</taxon>
        <taxon>Pseudomonadota</taxon>
        <taxon>Gammaproteobacteria</taxon>
        <taxon>Pseudomonadales</taxon>
        <taxon>Pseudomonadaceae</taxon>
        <taxon>Pseudomonas</taxon>
        <taxon>Pseudomonas syringae</taxon>
    </lineage>
</organism>
<proteinExistence type="inferred from homology"/>
<keyword id="KW-0949">S-adenosyl-L-methionine</keyword>
<keyword id="KW-0808">Transferase</keyword>
<protein>
    <recommendedName>
        <fullName evidence="1">Carboxy-S-adenosyl-L-methionine synthase</fullName>
        <shortName evidence="1">Cx-SAM synthase</shortName>
        <ecNumber evidence="1">2.1.3.-</ecNumber>
    </recommendedName>
</protein>
<dbReference type="EC" id="2.1.3.-" evidence="1"/>
<dbReference type="EMBL" id="CP000075">
    <property type="protein sequence ID" value="AAY38976.1"/>
    <property type="molecule type" value="Genomic_DNA"/>
</dbReference>
<dbReference type="RefSeq" id="WP_011268753.1">
    <property type="nucleotide sequence ID" value="NC_007005.1"/>
</dbReference>
<dbReference type="RefSeq" id="YP_237014.1">
    <property type="nucleotide sequence ID" value="NC_007005.1"/>
</dbReference>
<dbReference type="SMR" id="Q4ZPE6"/>
<dbReference type="STRING" id="205918.Psyr_3946"/>
<dbReference type="KEGG" id="psb:Psyr_3946"/>
<dbReference type="PATRIC" id="fig|205918.7.peg.4063"/>
<dbReference type="eggNOG" id="COG2226">
    <property type="taxonomic scope" value="Bacteria"/>
</dbReference>
<dbReference type="HOGENOM" id="CLU_078475_0_0_6"/>
<dbReference type="OrthoDB" id="9779941at2"/>
<dbReference type="Proteomes" id="UP000000426">
    <property type="component" value="Chromosome"/>
</dbReference>
<dbReference type="GO" id="GO:0016743">
    <property type="term" value="F:carboxyl- or carbamoyltransferase activity"/>
    <property type="evidence" value="ECO:0007669"/>
    <property type="project" value="UniProtKB-UniRule"/>
</dbReference>
<dbReference type="GO" id="GO:1904047">
    <property type="term" value="F:S-adenosyl-L-methionine binding"/>
    <property type="evidence" value="ECO:0007669"/>
    <property type="project" value="UniProtKB-UniRule"/>
</dbReference>
<dbReference type="GO" id="GO:0002098">
    <property type="term" value="P:tRNA wobble uridine modification"/>
    <property type="evidence" value="ECO:0007669"/>
    <property type="project" value="InterPro"/>
</dbReference>
<dbReference type="CDD" id="cd02440">
    <property type="entry name" value="AdoMet_MTases"/>
    <property type="match status" value="1"/>
</dbReference>
<dbReference type="Gene3D" id="3.40.50.150">
    <property type="entry name" value="Vaccinia Virus protein VP39"/>
    <property type="match status" value="1"/>
</dbReference>
<dbReference type="HAMAP" id="MF_01589">
    <property type="entry name" value="Cx_SAM_synthase"/>
    <property type="match status" value="1"/>
</dbReference>
<dbReference type="InterPro" id="IPR005271">
    <property type="entry name" value="CmoA"/>
</dbReference>
<dbReference type="InterPro" id="IPR041698">
    <property type="entry name" value="Methyltransf_25"/>
</dbReference>
<dbReference type="InterPro" id="IPR029063">
    <property type="entry name" value="SAM-dependent_MTases_sf"/>
</dbReference>
<dbReference type="NCBIfam" id="TIGR00740">
    <property type="entry name" value="carboxy-S-adenosyl-L-methionine synthase CmoA"/>
    <property type="match status" value="1"/>
</dbReference>
<dbReference type="NCBIfam" id="NF011995">
    <property type="entry name" value="PRK15451.1"/>
    <property type="match status" value="1"/>
</dbReference>
<dbReference type="PANTHER" id="PTHR43861:SF2">
    <property type="entry name" value="CARBOXY-S-ADENOSYL-L-METHIONINE SYNTHASE"/>
    <property type="match status" value="1"/>
</dbReference>
<dbReference type="PANTHER" id="PTHR43861">
    <property type="entry name" value="TRANS-ACONITATE 2-METHYLTRANSFERASE-RELATED"/>
    <property type="match status" value="1"/>
</dbReference>
<dbReference type="Pfam" id="PF13649">
    <property type="entry name" value="Methyltransf_25"/>
    <property type="match status" value="1"/>
</dbReference>
<dbReference type="PIRSF" id="PIRSF006325">
    <property type="entry name" value="MeTrfase_bac"/>
    <property type="match status" value="1"/>
</dbReference>
<dbReference type="SUPFAM" id="SSF53335">
    <property type="entry name" value="S-adenosyl-L-methionine-dependent methyltransferases"/>
    <property type="match status" value="1"/>
</dbReference>
<evidence type="ECO:0000255" key="1">
    <source>
        <dbReference type="HAMAP-Rule" id="MF_01589"/>
    </source>
</evidence>
<accession>Q4ZPE6</accession>
<comment type="function">
    <text evidence="1">Catalyzes the conversion of S-adenosyl-L-methionine (SAM) to carboxy-S-adenosyl-L-methionine (Cx-SAM).</text>
</comment>
<comment type="catalytic activity">
    <reaction evidence="1">
        <text>prephenate + S-adenosyl-L-methionine = carboxy-S-adenosyl-L-methionine + 3-phenylpyruvate + H2O</text>
        <dbReference type="Rhea" id="RHEA:51692"/>
        <dbReference type="ChEBI" id="CHEBI:15377"/>
        <dbReference type="ChEBI" id="CHEBI:18005"/>
        <dbReference type="ChEBI" id="CHEBI:29934"/>
        <dbReference type="ChEBI" id="CHEBI:59789"/>
        <dbReference type="ChEBI" id="CHEBI:134278"/>
    </reaction>
</comment>
<comment type="subunit">
    <text evidence="1">Homodimer.</text>
</comment>
<comment type="similarity">
    <text evidence="1">Belongs to the class I-like SAM-binding methyltransferase superfamily. Cx-SAM synthase family.</text>
</comment>
<reference key="1">
    <citation type="journal article" date="2005" name="Proc. Natl. Acad. Sci. U.S.A.">
        <title>Comparison of the complete genome sequences of Pseudomonas syringae pv. syringae B728a and pv. tomato DC3000.</title>
        <authorList>
            <person name="Feil H."/>
            <person name="Feil W.S."/>
            <person name="Chain P."/>
            <person name="Larimer F."/>
            <person name="Dibartolo G."/>
            <person name="Copeland A."/>
            <person name="Lykidis A."/>
            <person name="Trong S."/>
            <person name="Nolan M."/>
            <person name="Goltsman E."/>
            <person name="Thiel J."/>
            <person name="Malfatti S."/>
            <person name="Loper J.E."/>
            <person name="Lapidus A."/>
            <person name="Detter J.C."/>
            <person name="Land M."/>
            <person name="Richardson P.M."/>
            <person name="Kyrpides N.C."/>
            <person name="Ivanova N."/>
            <person name="Lindow S.E."/>
        </authorList>
    </citation>
    <scope>NUCLEOTIDE SEQUENCE [LARGE SCALE GENOMIC DNA]</scope>
    <source>
        <strain>B728a</strain>
    </source>
</reference>
<name>CMOA_PSEU2</name>
<gene>
    <name evidence="1" type="primary">cmoA</name>
    <name type="ordered locus">Psyr_3946</name>
</gene>